<sequence length="170" mass="18485">MSLRVVRSVRAVACSLRIALASCPPRPWAPSAAAVRSLRTGSALLSVRKFTEKHEWVTAKDGIGTVGISNFAQEALGDVVYCSLPEVGTKLKKQEEFGALESVKAASELYSPLSGEVTEVNEALAENPGLVNKSCYEDGWLIKMTLSDPSELDELMSEEAYEKYVKSIEE</sequence>
<accession>Q5I0P2</accession>
<keyword id="KW-0450">Lipoyl</keyword>
<keyword id="KW-0496">Mitochondrion</keyword>
<keyword id="KW-1185">Reference proteome</keyword>
<keyword id="KW-0809">Transit peptide</keyword>
<comment type="function">
    <text evidence="3">The glycine cleavage system catalyzes the degradation of glycine. The H protein (GCSH) shuttles the methylamine group of glycine from the P protein (GLDC) to the T protein (GCST). Has a pivotal role in the lipoylation of enzymes involved in cellular energetics such as the mitochondrial dihydrolipoyllysine-residue acetyltransferase component of pyruvate dehydrogenase complex (DLAT), and the mitochondrial dihydrolipoyllysine-residue succinyltransferase component of 2-oxoglutarate dehydrogenase complex (DLST).</text>
</comment>
<comment type="cofactor">
    <cofactor evidence="3">
        <name>(R)-lipoate</name>
        <dbReference type="ChEBI" id="CHEBI:83088"/>
    </cofactor>
    <text evidence="3">Binds 1 lipoyl cofactor covalently.</text>
</comment>
<comment type="subunit">
    <text evidence="2">The glycine cleavage system is composed of four proteins: P (GLDC), T (GCST), L (DLD) and H (GCSH). Interacts with GLDC (By similarity).</text>
</comment>
<comment type="subcellular location">
    <subcellularLocation>
        <location evidence="3">Mitochondrion</location>
    </subcellularLocation>
</comment>
<comment type="similarity">
    <text evidence="5">Belongs to the GcvH family.</text>
</comment>
<organism>
    <name type="scientific">Rattus norvegicus</name>
    <name type="common">Rat</name>
    <dbReference type="NCBI Taxonomy" id="10116"/>
    <lineage>
        <taxon>Eukaryota</taxon>
        <taxon>Metazoa</taxon>
        <taxon>Chordata</taxon>
        <taxon>Craniata</taxon>
        <taxon>Vertebrata</taxon>
        <taxon>Euteleostomi</taxon>
        <taxon>Mammalia</taxon>
        <taxon>Eutheria</taxon>
        <taxon>Euarchontoglires</taxon>
        <taxon>Glires</taxon>
        <taxon>Rodentia</taxon>
        <taxon>Myomorpha</taxon>
        <taxon>Muroidea</taxon>
        <taxon>Muridae</taxon>
        <taxon>Murinae</taxon>
        <taxon>Rattus</taxon>
    </lineage>
</organism>
<proteinExistence type="evidence at transcript level"/>
<gene>
    <name evidence="6" type="primary">Gcsh</name>
</gene>
<evidence type="ECO:0000250" key="1"/>
<evidence type="ECO:0000250" key="2">
    <source>
        <dbReference type="UniProtKB" id="P11183"/>
    </source>
</evidence>
<evidence type="ECO:0000250" key="3">
    <source>
        <dbReference type="UniProtKB" id="P23434"/>
    </source>
</evidence>
<evidence type="ECO:0000255" key="4">
    <source>
        <dbReference type="PROSITE-ProRule" id="PRU01066"/>
    </source>
</evidence>
<evidence type="ECO:0000305" key="5"/>
<evidence type="ECO:0000312" key="6">
    <source>
        <dbReference type="RGD" id="619946"/>
    </source>
</evidence>
<protein>
    <recommendedName>
        <fullName evidence="5">Glycine cleavage system H protein, mitochondrial</fullName>
    </recommendedName>
    <alternativeName>
        <fullName>Lipoic acid-containing protein</fullName>
    </alternativeName>
</protein>
<reference key="1">
    <citation type="journal article" date="2004" name="Genome Res.">
        <title>The status, quality, and expansion of the NIH full-length cDNA project: the Mammalian Gene Collection (MGC).</title>
        <authorList>
            <consortium name="The MGC Project Team"/>
        </authorList>
    </citation>
    <scope>NUCLEOTIDE SEQUENCE [LARGE SCALE MRNA]</scope>
    <source>
        <tissue>Liver</tissue>
    </source>
</reference>
<dbReference type="EMBL" id="BC088114">
    <property type="protein sequence ID" value="AAH88114.1"/>
    <property type="molecule type" value="mRNA"/>
</dbReference>
<dbReference type="RefSeq" id="NP_598282.2">
    <property type="nucleotide sequence ID" value="NM_133598.2"/>
</dbReference>
<dbReference type="SMR" id="Q5I0P2"/>
<dbReference type="FunCoup" id="Q5I0P2">
    <property type="interactions" value="1335"/>
</dbReference>
<dbReference type="STRING" id="10116.ENSRNOP00000015967"/>
<dbReference type="iPTMnet" id="Q5I0P2"/>
<dbReference type="PhosphoSitePlus" id="Q5I0P2"/>
<dbReference type="SwissPalm" id="Q5I0P2"/>
<dbReference type="jPOST" id="Q5I0P2"/>
<dbReference type="PaxDb" id="10116-ENSRNOP00000015967"/>
<dbReference type="Ensembl" id="ENSRNOT00000015967.6">
    <property type="protein sequence ID" value="ENSRNOP00000015967.5"/>
    <property type="gene ID" value="ENSRNOG00000011535.7"/>
</dbReference>
<dbReference type="GeneID" id="171133"/>
<dbReference type="KEGG" id="rno:171133"/>
<dbReference type="UCSC" id="RGD:619946">
    <property type="organism name" value="rat"/>
</dbReference>
<dbReference type="AGR" id="RGD:619946"/>
<dbReference type="CTD" id="2653"/>
<dbReference type="RGD" id="619946">
    <property type="gene designation" value="Gcsh"/>
</dbReference>
<dbReference type="eggNOG" id="KOG3373">
    <property type="taxonomic scope" value="Eukaryota"/>
</dbReference>
<dbReference type="GeneTree" id="ENSGT00390000011666"/>
<dbReference type="HOGENOM" id="CLU_097408_1_1_1"/>
<dbReference type="InParanoid" id="Q5I0P2"/>
<dbReference type="OMA" id="KEHEWIR"/>
<dbReference type="OrthoDB" id="10264154at2759"/>
<dbReference type="PhylomeDB" id="Q5I0P2"/>
<dbReference type="TreeFam" id="TF300258"/>
<dbReference type="Reactome" id="R-RNO-6783984">
    <property type="pathway name" value="Glycine degradation"/>
</dbReference>
<dbReference type="Reactome" id="R-RNO-9857492">
    <property type="pathway name" value="Protein lipoylation"/>
</dbReference>
<dbReference type="SABIO-RK" id="Q5I0P2"/>
<dbReference type="PRO" id="PR:Q5I0P2"/>
<dbReference type="Proteomes" id="UP000002494">
    <property type="component" value="Chromosome 19"/>
</dbReference>
<dbReference type="Bgee" id="ENSRNOG00000011535">
    <property type="expression patterns" value="Expressed in kidney and 20 other cell types or tissues"/>
</dbReference>
<dbReference type="GO" id="GO:0005960">
    <property type="term" value="C:glycine cleavage complex"/>
    <property type="evidence" value="ECO:0000318"/>
    <property type="project" value="GO_Central"/>
</dbReference>
<dbReference type="GO" id="GO:0005739">
    <property type="term" value="C:mitochondrion"/>
    <property type="evidence" value="ECO:0000318"/>
    <property type="project" value="GO_Central"/>
</dbReference>
<dbReference type="GO" id="GO:0004047">
    <property type="term" value="F:aminomethyltransferase activity"/>
    <property type="evidence" value="ECO:0000315"/>
    <property type="project" value="RGD"/>
</dbReference>
<dbReference type="GO" id="GO:0019899">
    <property type="term" value="F:enzyme binding"/>
    <property type="evidence" value="ECO:0000353"/>
    <property type="project" value="RGD"/>
</dbReference>
<dbReference type="GO" id="GO:0019464">
    <property type="term" value="P:glycine decarboxylation via glycine cleavage system"/>
    <property type="evidence" value="ECO:0000315"/>
    <property type="project" value="RGD"/>
</dbReference>
<dbReference type="CDD" id="cd06848">
    <property type="entry name" value="GCS_H"/>
    <property type="match status" value="1"/>
</dbReference>
<dbReference type="FunFam" id="2.40.50.100:FF:000045">
    <property type="entry name" value="Glycine cleavage system H protein"/>
    <property type="match status" value="1"/>
</dbReference>
<dbReference type="Gene3D" id="2.40.50.100">
    <property type="match status" value="1"/>
</dbReference>
<dbReference type="HAMAP" id="MF_00272">
    <property type="entry name" value="GcvH"/>
    <property type="match status" value="1"/>
</dbReference>
<dbReference type="InterPro" id="IPR003016">
    <property type="entry name" value="2-oxoA_DH_lipoyl-BS"/>
</dbReference>
<dbReference type="InterPro" id="IPR000089">
    <property type="entry name" value="Biotin_lipoyl"/>
</dbReference>
<dbReference type="InterPro" id="IPR002930">
    <property type="entry name" value="GCV_H"/>
</dbReference>
<dbReference type="InterPro" id="IPR033753">
    <property type="entry name" value="GCV_H/Fam206"/>
</dbReference>
<dbReference type="InterPro" id="IPR017453">
    <property type="entry name" value="GCV_H_sub"/>
</dbReference>
<dbReference type="InterPro" id="IPR011053">
    <property type="entry name" value="Single_hybrid_motif"/>
</dbReference>
<dbReference type="NCBIfam" id="TIGR00527">
    <property type="entry name" value="gcvH"/>
    <property type="match status" value="1"/>
</dbReference>
<dbReference type="NCBIfam" id="NF002270">
    <property type="entry name" value="PRK01202.1"/>
    <property type="match status" value="1"/>
</dbReference>
<dbReference type="PANTHER" id="PTHR11715">
    <property type="entry name" value="GLYCINE CLEAVAGE SYSTEM H PROTEIN"/>
    <property type="match status" value="1"/>
</dbReference>
<dbReference type="PANTHER" id="PTHR11715:SF42">
    <property type="entry name" value="GLYCINE CLEAVAGE SYSTEM H PROTEIN, MITOCHONDRIAL"/>
    <property type="match status" value="1"/>
</dbReference>
<dbReference type="Pfam" id="PF01597">
    <property type="entry name" value="GCV_H"/>
    <property type="match status" value="1"/>
</dbReference>
<dbReference type="SUPFAM" id="SSF51230">
    <property type="entry name" value="Single hybrid motif"/>
    <property type="match status" value="1"/>
</dbReference>
<dbReference type="PROSITE" id="PS50968">
    <property type="entry name" value="BIOTINYL_LIPOYL"/>
    <property type="match status" value="1"/>
</dbReference>
<dbReference type="PROSITE" id="PS00189">
    <property type="entry name" value="LIPOYL"/>
    <property type="match status" value="1"/>
</dbReference>
<feature type="transit peptide" description="Mitochondrion" evidence="1">
    <location>
        <begin position="1"/>
        <end position="45"/>
    </location>
</feature>
<feature type="chain" id="PRO_0000010726" description="Glycine cleavage system H protein, mitochondrial">
    <location>
        <begin position="46"/>
        <end position="170"/>
    </location>
</feature>
<feature type="domain" description="Lipoyl-binding" evidence="4">
    <location>
        <begin position="63"/>
        <end position="145"/>
    </location>
</feature>
<feature type="modified residue" description="N6-lipoyllysine" evidence="3 4">
    <location>
        <position position="104"/>
    </location>
</feature>
<name>GCSH_RAT</name>